<keyword id="KW-0028">Amino-acid biosynthesis</keyword>
<keyword id="KW-0067">ATP-binding</keyword>
<keyword id="KW-0963">Cytoplasm</keyword>
<keyword id="KW-0328">Glycosyltransferase</keyword>
<keyword id="KW-0368">Histidine biosynthesis</keyword>
<keyword id="KW-0547">Nucleotide-binding</keyword>
<keyword id="KW-0808">Transferase</keyword>
<comment type="function">
    <text evidence="1">Catalyzes the condensation of ATP and 5-phosphoribose 1-diphosphate to form N'-(5'-phosphoribosyl)-ATP (PR-ATP). Has a crucial role in the pathway because the rate of histidine biosynthesis seems to be controlled primarily by regulation of HisG enzymatic activity.</text>
</comment>
<comment type="catalytic activity">
    <reaction evidence="1">
        <text>1-(5-phospho-beta-D-ribosyl)-ATP + diphosphate = 5-phospho-alpha-D-ribose 1-diphosphate + ATP</text>
        <dbReference type="Rhea" id="RHEA:18473"/>
        <dbReference type="ChEBI" id="CHEBI:30616"/>
        <dbReference type="ChEBI" id="CHEBI:33019"/>
        <dbReference type="ChEBI" id="CHEBI:58017"/>
        <dbReference type="ChEBI" id="CHEBI:73183"/>
        <dbReference type="EC" id="2.4.2.17"/>
    </reaction>
</comment>
<comment type="pathway">
    <text evidence="1">Amino-acid biosynthesis; L-histidine biosynthesis; L-histidine from 5-phospho-alpha-D-ribose 1-diphosphate: step 1/9.</text>
</comment>
<comment type="subunit">
    <text evidence="1">Heteromultimer composed of HisG and HisZ subunits.</text>
</comment>
<comment type="subcellular location">
    <subcellularLocation>
        <location evidence="1">Cytoplasm</location>
    </subcellularLocation>
</comment>
<comment type="domain">
    <text>Lacks the C-terminal regulatory region which is replaced by HisZ.</text>
</comment>
<comment type="similarity">
    <text evidence="1">Belongs to the ATP phosphoribosyltransferase family. Short subfamily.</text>
</comment>
<protein>
    <recommendedName>
        <fullName evidence="1">ATP phosphoribosyltransferase</fullName>
        <shortName evidence="1">ATP-PRT</shortName>
        <shortName evidence="1">ATP-PRTase</shortName>
        <ecNumber evidence="1">2.4.2.17</ecNumber>
    </recommendedName>
</protein>
<dbReference type="EC" id="2.4.2.17" evidence="1"/>
<dbReference type="EMBL" id="CP000680">
    <property type="protein sequence ID" value="ABP83651.1"/>
    <property type="molecule type" value="Genomic_DNA"/>
</dbReference>
<dbReference type="SMR" id="A4XQN5"/>
<dbReference type="STRING" id="399739.Pmen_0883"/>
<dbReference type="KEGG" id="pmy:Pmen_0883"/>
<dbReference type="PATRIC" id="fig|399739.8.peg.892"/>
<dbReference type="eggNOG" id="COG0040">
    <property type="taxonomic scope" value="Bacteria"/>
</dbReference>
<dbReference type="HOGENOM" id="CLU_038115_2_0_6"/>
<dbReference type="OrthoDB" id="9801867at2"/>
<dbReference type="UniPathway" id="UPA00031">
    <property type="reaction ID" value="UER00006"/>
</dbReference>
<dbReference type="GO" id="GO:0005737">
    <property type="term" value="C:cytoplasm"/>
    <property type="evidence" value="ECO:0007669"/>
    <property type="project" value="UniProtKB-SubCell"/>
</dbReference>
<dbReference type="GO" id="GO:0005524">
    <property type="term" value="F:ATP binding"/>
    <property type="evidence" value="ECO:0007669"/>
    <property type="project" value="UniProtKB-KW"/>
</dbReference>
<dbReference type="GO" id="GO:0003879">
    <property type="term" value="F:ATP phosphoribosyltransferase activity"/>
    <property type="evidence" value="ECO:0007669"/>
    <property type="project" value="UniProtKB-UniRule"/>
</dbReference>
<dbReference type="GO" id="GO:0000105">
    <property type="term" value="P:L-histidine biosynthetic process"/>
    <property type="evidence" value="ECO:0007669"/>
    <property type="project" value="UniProtKB-UniRule"/>
</dbReference>
<dbReference type="CDD" id="cd13595">
    <property type="entry name" value="PBP2_HisGs"/>
    <property type="match status" value="1"/>
</dbReference>
<dbReference type="FunFam" id="3.40.190.10:FF:000011">
    <property type="entry name" value="ATP phosphoribosyltransferase"/>
    <property type="match status" value="1"/>
</dbReference>
<dbReference type="FunFam" id="3.40.190.10:FF:000022">
    <property type="entry name" value="ATP phosphoribosyltransferase"/>
    <property type="match status" value="1"/>
</dbReference>
<dbReference type="Gene3D" id="3.40.190.10">
    <property type="entry name" value="Periplasmic binding protein-like II"/>
    <property type="match status" value="2"/>
</dbReference>
<dbReference type="HAMAP" id="MF_01018">
    <property type="entry name" value="HisG_Short"/>
    <property type="match status" value="1"/>
</dbReference>
<dbReference type="InterPro" id="IPR013820">
    <property type="entry name" value="ATP_PRibTrfase_cat"/>
</dbReference>
<dbReference type="InterPro" id="IPR018198">
    <property type="entry name" value="ATP_PRibTrfase_CS"/>
</dbReference>
<dbReference type="InterPro" id="IPR001348">
    <property type="entry name" value="ATP_PRibTrfase_HisG"/>
</dbReference>
<dbReference type="InterPro" id="IPR024893">
    <property type="entry name" value="ATP_PRibTrfase_HisG_short"/>
</dbReference>
<dbReference type="NCBIfam" id="TIGR00070">
    <property type="entry name" value="hisG"/>
    <property type="match status" value="1"/>
</dbReference>
<dbReference type="PANTHER" id="PTHR21403:SF8">
    <property type="entry name" value="ATP PHOSPHORIBOSYLTRANSFERASE"/>
    <property type="match status" value="1"/>
</dbReference>
<dbReference type="PANTHER" id="PTHR21403">
    <property type="entry name" value="ATP PHOSPHORIBOSYLTRANSFERASE ATP-PRTASE"/>
    <property type="match status" value="1"/>
</dbReference>
<dbReference type="Pfam" id="PF01634">
    <property type="entry name" value="HisG"/>
    <property type="match status" value="1"/>
</dbReference>
<dbReference type="SUPFAM" id="SSF53850">
    <property type="entry name" value="Periplasmic binding protein-like II"/>
    <property type="match status" value="1"/>
</dbReference>
<dbReference type="PROSITE" id="PS01316">
    <property type="entry name" value="ATP_P_PHORIBOSYLTR"/>
    <property type="match status" value="1"/>
</dbReference>
<accession>A4XQN5</accession>
<organism>
    <name type="scientific">Ectopseudomonas mendocina (strain ymp)</name>
    <name type="common">Pseudomonas mendocina</name>
    <dbReference type="NCBI Taxonomy" id="399739"/>
    <lineage>
        <taxon>Bacteria</taxon>
        <taxon>Pseudomonadati</taxon>
        <taxon>Pseudomonadota</taxon>
        <taxon>Gammaproteobacteria</taxon>
        <taxon>Pseudomonadales</taxon>
        <taxon>Pseudomonadaceae</taxon>
        <taxon>Ectopseudomonas</taxon>
    </lineage>
</organism>
<feature type="chain" id="PRO_1000063300" description="ATP phosphoribosyltransferase">
    <location>
        <begin position="1"/>
        <end position="211"/>
    </location>
</feature>
<reference key="1">
    <citation type="submission" date="2007-04" db="EMBL/GenBank/DDBJ databases">
        <title>Complete sequence of Pseudomonas mendocina ymp.</title>
        <authorList>
            <consortium name="US DOE Joint Genome Institute"/>
            <person name="Copeland A."/>
            <person name="Lucas S."/>
            <person name="Lapidus A."/>
            <person name="Barry K."/>
            <person name="Glavina del Rio T."/>
            <person name="Dalin E."/>
            <person name="Tice H."/>
            <person name="Pitluck S."/>
            <person name="Kiss H."/>
            <person name="Brettin T."/>
            <person name="Detter J.C."/>
            <person name="Bruce D."/>
            <person name="Han C."/>
            <person name="Schmutz J."/>
            <person name="Larimer F."/>
            <person name="Land M."/>
            <person name="Hauser L."/>
            <person name="Kyrpides N."/>
            <person name="Mikhailova N."/>
            <person name="Hersman L."/>
            <person name="Dubois J."/>
            <person name="Maurice P."/>
            <person name="Richardson P."/>
        </authorList>
    </citation>
    <scope>NUCLEOTIDE SEQUENCE [LARGE SCALE GENOMIC DNA]</scope>
    <source>
        <strain>ymp</strain>
    </source>
</reference>
<gene>
    <name evidence="1" type="primary">hisG</name>
    <name type="ordered locus">Pmen_0883</name>
</gene>
<name>HIS1_ECTM1</name>
<sequence>MLTIALSKGRILDDTLPLLAAAGIEPTENPDKSRKLIIPTTQDDVRLLIVRATDVPTYVEHGAADLGVAGKDVLMEYGGQGLYEPLDLQIAKCKLMTAGKVGAPEPKGRLRVATKFVNVAKRYYAEQGRQVDIIKLYGSMELAPLVGLADKIIDVVDTGNTLRANGLEPQELIATISSRLIVNKASMKMQHGRIQALIETLRGAVEARHQG</sequence>
<evidence type="ECO:0000255" key="1">
    <source>
        <dbReference type="HAMAP-Rule" id="MF_01018"/>
    </source>
</evidence>
<proteinExistence type="inferred from homology"/>